<dbReference type="EMBL" id="BC081173">
    <property type="protein sequence ID" value="AAH81173.1"/>
    <property type="molecule type" value="mRNA"/>
</dbReference>
<dbReference type="RefSeq" id="NP_001087754.1">
    <property type="nucleotide sequence ID" value="NM_001094285.1"/>
</dbReference>
<dbReference type="SMR" id="Q66IV5"/>
<dbReference type="GeneID" id="447578"/>
<dbReference type="KEGG" id="xla:447578"/>
<dbReference type="AGR" id="Xenbase:XB-GENE-6253751"/>
<dbReference type="CTD" id="447578"/>
<dbReference type="OMA" id="QTVAFWI"/>
<dbReference type="OrthoDB" id="5953051at2759"/>
<dbReference type="Proteomes" id="UP000186698">
    <property type="component" value="Chromosome 3L"/>
</dbReference>
<dbReference type="Bgee" id="447578">
    <property type="expression patterns" value="Expressed in brain and 19 other cell types or tissues"/>
</dbReference>
<dbReference type="GO" id="GO:0030027">
    <property type="term" value="C:lamellipodium"/>
    <property type="evidence" value="ECO:0000250"/>
    <property type="project" value="UniProtKB"/>
</dbReference>
<dbReference type="GO" id="GO:0033058">
    <property type="term" value="P:directional locomotion"/>
    <property type="evidence" value="ECO:0000250"/>
    <property type="project" value="UniProtKB"/>
</dbReference>
<dbReference type="GO" id="GO:0051126">
    <property type="term" value="P:negative regulation of actin nucleation"/>
    <property type="evidence" value="ECO:0000250"/>
    <property type="project" value="UniProtKB"/>
</dbReference>
<dbReference type="GO" id="GO:0030336">
    <property type="term" value="P:negative regulation of cell migration"/>
    <property type="evidence" value="ECO:0000250"/>
    <property type="project" value="UniProtKB"/>
</dbReference>
<dbReference type="GO" id="GO:2000393">
    <property type="term" value="P:negative regulation of lamellipodium morphogenesis"/>
    <property type="evidence" value="ECO:0000250"/>
    <property type="project" value="UniProtKB"/>
</dbReference>
<dbReference type="InterPro" id="IPR018889">
    <property type="entry name" value="Arpin"/>
</dbReference>
<dbReference type="PANTHER" id="PTHR31199">
    <property type="entry name" value="ARPIN"/>
    <property type="match status" value="1"/>
</dbReference>
<dbReference type="PANTHER" id="PTHR31199:SF1">
    <property type="entry name" value="ARPIN"/>
    <property type="match status" value="1"/>
</dbReference>
<dbReference type="Pfam" id="PF10574">
    <property type="entry name" value="UPF0552"/>
    <property type="match status" value="1"/>
</dbReference>
<organism>
    <name type="scientific">Xenopus laevis</name>
    <name type="common">African clawed frog</name>
    <dbReference type="NCBI Taxonomy" id="8355"/>
    <lineage>
        <taxon>Eukaryota</taxon>
        <taxon>Metazoa</taxon>
        <taxon>Chordata</taxon>
        <taxon>Craniata</taxon>
        <taxon>Vertebrata</taxon>
        <taxon>Euteleostomi</taxon>
        <taxon>Amphibia</taxon>
        <taxon>Batrachia</taxon>
        <taxon>Anura</taxon>
        <taxon>Pipoidea</taxon>
        <taxon>Pipidae</taxon>
        <taxon>Xenopodinae</taxon>
        <taxon>Xenopus</taxon>
        <taxon>Xenopus</taxon>
    </lineage>
</organism>
<gene>
    <name type="primary">arpin</name>
</gene>
<reference key="1">
    <citation type="submission" date="2004-08" db="EMBL/GenBank/DDBJ databases">
        <authorList>
            <consortium name="NIH - Xenopus Gene Collection (XGC) project"/>
        </authorList>
    </citation>
    <scope>NUCLEOTIDE SEQUENCE [LARGE SCALE MRNA]</scope>
    <source>
        <tissue>Eye</tissue>
    </source>
</reference>
<proteinExistence type="evidence at transcript level"/>
<evidence type="ECO:0000250" key="1"/>
<evidence type="ECO:0000256" key="2">
    <source>
        <dbReference type="SAM" id="MobiDB-lite"/>
    </source>
</evidence>
<evidence type="ECO:0000305" key="3"/>
<accession>Q66IV5</accession>
<keyword id="KW-0966">Cell projection</keyword>
<keyword id="KW-1185">Reference proteome</keyword>
<name>ARPIN_XENLA</name>
<feature type="chain" id="PRO_0000327662" description="Arpin">
    <location>
        <begin position="1"/>
        <end position="227"/>
    </location>
</feature>
<feature type="region of interest" description="Disordered" evidence="2">
    <location>
        <begin position="196"/>
        <end position="227"/>
    </location>
</feature>
<sequence length="227" mass="25714">MSRIYQHTALQNKPVHDERFDGSWEPGAFQRGTGVLLEGTLLDFSRHAVTDSKGKKERWYILYLRPSKIHRRHFDSKGNEIEPNFSDTKKVNTGFLMSSYKVEAKGESDRISLEELNRLVNKVNLMKISEKHTPRETVAFWLPEADMEKTELELGEQLRVKTMGDGPFLFSLAKVDSGTVTKCNFAGDAQAGASWTDNIMERKSQNTSAPSEPRGQGDGAEDDEWDD</sequence>
<comment type="function">
    <text evidence="1">Regulates actin polymerization by inhibiting the actin-nucleating activity of the Arp2/3 complex; the function is competitive with nucleation promoting factors. Involved in steering cell migration by controlling its directional persistence (By similarity).</text>
</comment>
<comment type="subunit">
    <text evidence="1">Associates with the Arp2/3 complex.</text>
</comment>
<comment type="subcellular location">
    <subcellularLocation>
        <location evidence="1">Cell projection</location>
        <location evidence="1">Lamellipodium</location>
    </subcellularLocation>
</comment>
<comment type="domain">
    <text evidence="1">The acidic C-terminus is necessary and sufficient to inhibit ARP2/3 complex activity.</text>
</comment>
<comment type="similarity">
    <text evidence="3">Belongs to the Arpin family.</text>
</comment>
<protein>
    <recommendedName>
        <fullName>Arpin</fullName>
    </recommendedName>
</protein>